<proteinExistence type="evidence at transcript level"/>
<protein>
    <recommendedName>
        <fullName evidence="3 4">Stearoyl-CoA desaturase</fullName>
        <ecNumber evidence="2">1.14.19.1</ecNumber>
    </recommendedName>
    <alternativeName>
        <fullName>Acyl-CoA desaturase</fullName>
    </alternativeName>
    <alternativeName>
        <fullName>Delta(9)-desaturase</fullName>
        <shortName>Delta-9 desaturase</shortName>
    </alternativeName>
    <alternativeName>
        <fullName>Fatty acid desaturase</fullName>
    </alternativeName>
</protein>
<comment type="function">
    <text evidence="1 2">Stearoyl-CoA desaturase that utilizes O(2) and electrons from reduced cytochrome b5 to introduce the first double bond into saturated fatty acyl-CoA substrates. Catalyzes the insertion of a cis double bond at the delta-9 position into fatty acyl-CoA substrates including palmitoyl-CoA and stearoyl-CoA (By similarity). Gives rise to a mixture of 16:1 and 18:1 unsaturated fatty acids. Plays an important role in lipid biosynthesis. Plays an important role in regulating the expression of genes that are involved in lipogenesis and in regulating mitochondrial fatty acid oxidation (By similarity). Plays an important role in body energy homeostasis (By similarity). Contributes to the biosynthesis of membrane phospholipids, cholesterol esters and triglycerides (By similarity).</text>
</comment>
<comment type="catalytic activity">
    <reaction evidence="2">
        <text>octadecanoyl-CoA + 2 Fe(II)-[cytochrome b5] + O2 + 2 H(+) = (9Z)-octadecenoyl-CoA + 2 Fe(III)-[cytochrome b5] + 2 H2O</text>
        <dbReference type="Rhea" id="RHEA:19721"/>
        <dbReference type="Rhea" id="RHEA-COMP:10438"/>
        <dbReference type="Rhea" id="RHEA-COMP:10439"/>
        <dbReference type="ChEBI" id="CHEBI:15377"/>
        <dbReference type="ChEBI" id="CHEBI:15378"/>
        <dbReference type="ChEBI" id="CHEBI:15379"/>
        <dbReference type="ChEBI" id="CHEBI:29033"/>
        <dbReference type="ChEBI" id="CHEBI:29034"/>
        <dbReference type="ChEBI" id="CHEBI:57387"/>
        <dbReference type="ChEBI" id="CHEBI:57394"/>
        <dbReference type="EC" id="1.14.19.1"/>
    </reaction>
</comment>
<comment type="catalytic activity">
    <reaction evidence="1">
        <text>hexadecanoyl-CoA + 2 Fe(II)-[cytochrome b5] + O2 + 2 H(+) = (9Z)-hexadecenoyl-CoA + 2 Fe(III)-[cytochrome b5] + 2 H2O</text>
        <dbReference type="Rhea" id="RHEA:36931"/>
        <dbReference type="Rhea" id="RHEA-COMP:10438"/>
        <dbReference type="Rhea" id="RHEA-COMP:10439"/>
        <dbReference type="ChEBI" id="CHEBI:15377"/>
        <dbReference type="ChEBI" id="CHEBI:15378"/>
        <dbReference type="ChEBI" id="CHEBI:15379"/>
        <dbReference type="ChEBI" id="CHEBI:29033"/>
        <dbReference type="ChEBI" id="CHEBI:29034"/>
        <dbReference type="ChEBI" id="CHEBI:57379"/>
        <dbReference type="ChEBI" id="CHEBI:61540"/>
    </reaction>
</comment>
<comment type="cofactor">
    <cofactor evidence="2">
        <name>Fe(2+)</name>
        <dbReference type="ChEBI" id="CHEBI:29033"/>
    </cofactor>
    <text evidence="2">Expected to bind 2 Fe(2+) ions per subunit.</text>
</comment>
<comment type="subcellular location">
    <subcellularLocation>
        <location evidence="2">Endoplasmic reticulum membrane</location>
        <topology evidence="4">Multi-pass membrane protein</topology>
    </subcellularLocation>
</comment>
<comment type="domain">
    <text evidence="1">The histidine box domains are involved in binding the catalytic metal ions.</text>
</comment>
<comment type="similarity">
    <text evidence="4">Belongs to the fatty acid desaturase type 1 family.</text>
</comment>
<sequence length="359" mass="41705">MPAHLLQEEISSSYTTTTTITAPPSRVLQNGGGKLEKTPLYLEEDIRPEMRDDIYDPTYQDKEGPKPKLEYVWRNIILMSLLHLGALYGITLIPTCKIYTYIWVLFYYLMGALGITAGAHRLWSHRTYKARLPLRVFLIIGNTMAFQNDVFEWSRDHRAHHKFSETDADPHNSRRGFFFSHVGWLLVRKHPAVKEKGSTLNLSDLRAEKLVMFQRRYYKPGVLLLCFILPTLVPWYLWDETFQNSLFFATLFRYALGLNVTWLVNSAAHMYGYRPYDKTINPRENILVSLGAAGEGFHNYHHTFPYDYSASEYRWHINFTTFFIDCMAAIGLAYDRKKVSKAAILARIKRTGEESYKSG</sequence>
<keyword id="KW-0256">Endoplasmic reticulum</keyword>
<keyword id="KW-0275">Fatty acid biosynthesis</keyword>
<keyword id="KW-0276">Fatty acid metabolism</keyword>
<keyword id="KW-0408">Iron</keyword>
<keyword id="KW-0444">Lipid biosynthesis</keyword>
<keyword id="KW-0443">Lipid metabolism</keyword>
<keyword id="KW-0472">Membrane</keyword>
<keyword id="KW-0479">Metal-binding</keyword>
<keyword id="KW-0560">Oxidoreductase</keyword>
<keyword id="KW-0597">Phosphoprotein</keyword>
<keyword id="KW-1185">Reference proteome</keyword>
<keyword id="KW-0812">Transmembrane</keyword>
<keyword id="KW-1133">Transmembrane helix</keyword>
<evidence type="ECO:0000250" key="1">
    <source>
        <dbReference type="UniProtKB" id="O00767"/>
    </source>
</evidence>
<evidence type="ECO:0000250" key="2">
    <source>
        <dbReference type="UniProtKB" id="P13516"/>
    </source>
</evidence>
<evidence type="ECO:0000303" key="3">
    <source ref="2"/>
</evidence>
<evidence type="ECO:0000305" key="4"/>
<dbReference type="EC" id="1.14.19.1" evidence="2"/>
<dbReference type="EMBL" id="AF188710">
    <property type="protein sequence ID" value="AAF22305.1"/>
    <property type="molecule type" value="mRNA"/>
</dbReference>
<dbReference type="EMBL" id="AF481919">
    <property type="protein sequence ID" value="AAL99940.1"/>
    <property type="molecule type" value="Genomic_DNA"/>
</dbReference>
<dbReference type="EMBL" id="AF481915">
    <property type="protein sequence ID" value="AAL99940.1"/>
    <property type="status" value="JOINED"/>
    <property type="molecule type" value="Genomic_DNA"/>
</dbReference>
<dbReference type="EMBL" id="AF481916">
    <property type="protein sequence ID" value="AAL99940.1"/>
    <property type="status" value="JOINED"/>
    <property type="molecule type" value="Genomic_DNA"/>
</dbReference>
<dbReference type="EMBL" id="AF481917">
    <property type="protein sequence ID" value="AAL99940.1"/>
    <property type="status" value="JOINED"/>
    <property type="molecule type" value="Genomic_DNA"/>
</dbReference>
<dbReference type="EMBL" id="AF481918">
    <property type="protein sequence ID" value="AAL99940.1"/>
    <property type="status" value="JOINED"/>
    <property type="molecule type" value="Genomic_DNA"/>
</dbReference>
<dbReference type="EMBL" id="AY241932">
    <property type="protein sequence ID" value="AAO63569.1"/>
    <property type="molecule type" value="Genomic_DNA"/>
</dbReference>
<dbReference type="EMBL" id="AY241933">
    <property type="protein sequence ID" value="AAO63570.1"/>
    <property type="molecule type" value="mRNA"/>
</dbReference>
<dbReference type="EMBL" id="BC112700">
    <property type="protein sequence ID" value="AAI12701.1"/>
    <property type="molecule type" value="mRNA"/>
</dbReference>
<dbReference type="PIR" id="PC7092">
    <property type="entry name" value="PC7092"/>
</dbReference>
<dbReference type="RefSeq" id="NP_776384.3">
    <property type="nucleotide sequence ID" value="NM_173959.4"/>
</dbReference>
<dbReference type="SMR" id="Q9TT94"/>
<dbReference type="FunCoup" id="Q9TT94">
    <property type="interactions" value="299"/>
</dbReference>
<dbReference type="STRING" id="9913.ENSBTAP00000070213"/>
<dbReference type="PaxDb" id="9913-ENSBTAP00000056263"/>
<dbReference type="Ensembl" id="ENSBTAT00000078682.2">
    <property type="protein sequence ID" value="ENSBTAP00000070213.1"/>
    <property type="gene ID" value="ENSBTAG00000055207.2"/>
</dbReference>
<dbReference type="GeneID" id="280924"/>
<dbReference type="KEGG" id="bta:280924"/>
<dbReference type="CTD" id="6319"/>
<dbReference type="VEuPathDB" id="HostDB:ENSBTAG00000055207"/>
<dbReference type="VGNC" id="VGNC:106916">
    <property type="gene designation" value="SCD"/>
</dbReference>
<dbReference type="eggNOG" id="KOG1600">
    <property type="taxonomic scope" value="Eukaryota"/>
</dbReference>
<dbReference type="GeneTree" id="ENSGT00940000154908"/>
<dbReference type="HOGENOM" id="CLU_027359_2_0_1"/>
<dbReference type="InParanoid" id="Q9TT94"/>
<dbReference type="OMA" id="SCGESWH"/>
<dbReference type="OrthoDB" id="10260134at2759"/>
<dbReference type="BRENDA" id="1.14.19.1">
    <property type="organism ID" value="908"/>
</dbReference>
<dbReference type="Reactome" id="R-BTA-75105">
    <property type="pathway name" value="Fatty acyl-CoA biosynthesis"/>
</dbReference>
<dbReference type="Proteomes" id="UP000009136">
    <property type="component" value="Chromosome 26"/>
</dbReference>
<dbReference type="Bgee" id="ENSBTAG00000055207">
    <property type="expression patterns" value="Expressed in subcutaneous adipose tissue and 106 other cell types or tissues"/>
</dbReference>
<dbReference type="GO" id="GO:0005789">
    <property type="term" value="C:endoplasmic reticulum membrane"/>
    <property type="evidence" value="ECO:0000250"/>
    <property type="project" value="UniProtKB"/>
</dbReference>
<dbReference type="GO" id="GO:0016020">
    <property type="term" value="C:membrane"/>
    <property type="evidence" value="ECO:0000250"/>
    <property type="project" value="UniProtKB"/>
</dbReference>
<dbReference type="GO" id="GO:0005730">
    <property type="term" value="C:nucleolus"/>
    <property type="evidence" value="ECO:0007669"/>
    <property type="project" value="Ensembl"/>
</dbReference>
<dbReference type="GO" id="GO:0005506">
    <property type="term" value="F:iron ion binding"/>
    <property type="evidence" value="ECO:0000250"/>
    <property type="project" value="UniProtKB"/>
</dbReference>
<dbReference type="GO" id="GO:0016491">
    <property type="term" value="F:oxidoreductase activity"/>
    <property type="evidence" value="ECO:0000250"/>
    <property type="project" value="UniProtKB"/>
</dbReference>
<dbReference type="GO" id="GO:0032896">
    <property type="term" value="F:palmitoyl-CoA 9-desaturase activity"/>
    <property type="evidence" value="ECO:0000318"/>
    <property type="project" value="GO_Central"/>
</dbReference>
<dbReference type="GO" id="GO:0004768">
    <property type="term" value="F:stearoyl-CoA 9-desaturase activity"/>
    <property type="evidence" value="ECO:0000314"/>
    <property type="project" value="AgBase"/>
</dbReference>
<dbReference type="GO" id="GO:1903966">
    <property type="term" value="P:monounsaturated fatty acid biosynthetic process"/>
    <property type="evidence" value="ECO:0000318"/>
    <property type="project" value="GO_Central"/>
</dbReference>
<dbReference type="GO" id="GO:0070542">
    <property type="term" value="P:response to fatty acid"/>
    <property type="evidence" value="ECO:0000314"/>
    <property type="project" value="AgBase"/>
</dbReference>
<dbReference type="GO" id="GO:0006636">
    <property type="term" value="P:unsaturated fatty acid biosynthetic process"/>
    <property type="evidence" value="ECO:0000250"/>
    <property type="project" value="UniProtKB"/>
</dbReference>
<dbReference type="CDD" id="cd03505">
    <property type="entry name" value="Delta9-FADS-like"/>
    <property type="match status" value="1"/>
</dbReference>
<dbReference type="InterPro" id="IPR015876">
    <property type="entry name" value="Acyl-CoA_DS"/>
</dbReference>
<dbReference type="InterPro" id="IPR001522">
    <property type="entry name" value="FADS-1_CS"/>
</dbReference>
<dbReference type="PANTHER" id="PTHR11351">
    <property type="entry name" value="ACYL-COA DESATURASE"/>
    <property type="match status" value="1"/>
</dbReference>
<dbReference type="PANTHER" id="PTHR11351:SF102">
    <property type="entry name" value="STEAROYL-COA DESATURASE"/>
    <property type="match status" value="1"/>
</dbReference>
<dbReference type="PRINTS" id="PR00075">
    <property type="entry name" value="FACDDSATRASE"/>
</dbReference>
<dbReference type="PROSITE" id="PS00476">
    <property type="entry name" value="FATTY_ACID_DESATUR_1"/>
    <property type="match status" value="1"/>
</dbReference>
<organism>
    <name type="scientific">Bos taurus</name>
    <name type="common">Bovine</name>
    <dbReference type="NCBI Taxonomy" id="9913"/>
    <lineage>
        <taxon>Eukaryota</taxon>
        <taxon>Metazoa</taxon>
        <taxon>Chordata</taxon>
        <taxon>Craniata</taxon>
        <taxon>Vertebrata</taxon>
        <taxon>Euteleostomi</taxon>
        <taxon>Mammalia</taxon>
        <taxon>Eutheria</taxon>
        <taxon>Laurasiatheria</taxon>
        <taxon>Artiodactyla</taxon>
        <taxon>Ruminantia</taxon>
        <taxon>Pecora</taxon>
        <taxon>Bovidae</taxon>
        <taxon>Bovinae</taxon>
        <taxon>Bos</taxon>
    </lineage>
</organism>
<reference key="1">
    <citation type="journal article" date="2000" name="Biosci. Biotechnol. Biochem.">
        <title>Cloning and characterization of bovine stearoyl CoA desaturase l cDNA from adipose tissues.</title>
        <authorList>
            <person name="Chung M.I."/>
            <person name="Ha S.H."/>
            <person name="Jeong S."/>
            <person name="Bok J."/>
            <person name="Cho K."/>
            <person name="Baik M.G."/>
            <person name="Choi Y.J."/>
        </authorList>
    </citation>
    <scope>NUCLEOTIDE SEQUENCE [MRNA]</scope>
    <source>
        <tissue>Adipose tissue</tissue>
    </source>
</reference>
<reference key="2">
    <citation type="submission" date="2002-02" db="EMBL/GenBank/DDBJ databases">
        <title>Bovine stearoyl-CoA desaturase gene structure and large scale SNP analysis.</title>
        <authorList>
            <person name="Glimm D."/>
            <person name="Dong F."/>
            <person name="Kennelly J."/>
        </authorList>
    </citation>
    <scope>NUCLEOTIDE SEQUENCE [GENOMIC DNA]</scope>
</reference>
<reference key="3">
    <citation type="submission" date="2003-02" db="EMBL/GenBank/DDBJ databases">
        <title>Genomic structure and expression of the bovine stearoyl-CoA desaturase gene.</title>
        <authorList>
            <person name="Medrano J.F."/>
            <person name="Islas-Trejo A.D."/>
            <person name="Johnson A.M."/>
            <person name="DePeters E.J."/>
        </authorList>
    </citation>
    <scope>NUCLEOTIDE SEQUENCE [GENOMIC DNA / MRNA]</scope>
</reference>
<reference key="4">
    <citation type="submission" date="2006-01" db="EMBL/GenBank/DDBJ databases">
        <authorList>
            <consortium name="NIH - Mammalian Gene Collection (MGC) project"/>
        </authorList>
    </citation>
    <scope>NUCLEOTIDE SEQUENCE [LARGE SCALE MRNA]</scope>
    <source>
        <strain>Hereford</strain>
        <tissue>Hypothalamus</tissue>
    </source>
</reference>
<name>SCD_BOVIN</name>
<accession>Q9TT94</accession>
<accession>Q861R6</accession>
<accession>Q8SQ76</accession>
<gene>
    <name type="primary">SCD</name>
</gene>
<feature type="chain" id="PRO_0000185394" description="Stearoyl-CoA desaturase">
    <location>
        <begin position="1"/>
        <end position="359"/>
    </location>
</feature>
<feature type="topological domain" description="Cytoplasmic" evidence="1">
    <location>
        <begin position="1"/>
        <end position="72"/>
    </location>
</feature>
<feature type="transmembrane region" description="Helical" evidence="1">
    <location>
        <begin position="73"/>
        <end position="93"/>
    </location>
</feature>
<feature type="topological domain" description="Lumenal" evidence="1">
    <location>
        <begin position="94"/>
        <end position="97"/>
    </location>
</feature>
<feature type="transmembrane region" description="Helical" evidence="1">
    <location>
        <begin position="98"/>
        <end position="118"/>
    </location>
</feature>
<feature type="topological domain" description="Cytoplasmic" evidence="1">
    <location>
        <begin position="119"/>
        <end position="217"/>
    </location>
</feature>
<feature type="transmembrane region" description="Helical" evidence="1">
    <location>
        <begin position="218"/>
        <end position="237"/>
    </location>
</feature>
<feature type="topological domain" description="Lumenal" evidence="1">
    <location>
        <begin position="238"/>
        <end position="241"/>
    </location>
</feature>
<feature type="transmembrane region" description="Helical" evidence="1">
    <location>
        <begin position="242"/>
        <end position="263"/>
    </location>
</feature>
<feature type="topological domain" description="Cytoplasmic" evidence="1">
    <location>
        <begin position="264"/>
        <end position="359"/>
    </location>
</feature>
<feature type="short sequence motif" description="Histidine box-1" evidence="4">
    <location>
        <begin position="120"/>
        <end position="125"/>
    </location>
</feature>
<feature type="short sequence motif" description="Histidine box-2" evidence="4">
    <location>
        <begin position="157"/>
        <end position="161"/>
    </location>
</feature>
<feature type="short sequence motif" description="Histidine box-3" evidence="4">
    <location>
        <begin position="298"/>
        <end position="302"/>
    </location>
</feature>
<feature type="binding site" evidence="1">
    <location>
        <position position="75"/>
    </location>
    <ligand>
        <name>substrate</name>
    </ligand>
</feature>
<feature type="binding site" evidence="2">
    <location>
        <position position="120"/>
    </location>
    <ligand>
        <name>Fe cation</name>
        <dbReference type="ChEBI" id="CHEBI:24875"/>
        <label>1</label>
    </ligand>
</feature>
<feature type="binding site" evidence="2">
    <location>
        <position position="125"/>
    </location>
    <ligand>
        <name>Fe cation</name>
        <dbReference type="ChEBI" id="CHEBI:24875"/>
        <label>1</label>
    </ligand>
</feature>
<feature type="binding site" evidence="1">
    <location>
        <position position="148"/>
    </location>
    <ligand>
        <name>substrate</name>
    </ligand>
</feature>
<feature type="binding site" evidence="1">
    <location>
        <position position="155"/>
    </location>
    <ligand>
        <name>substrate</name>
    </ligand>
</feature>
<feature type="binding site" evidence="1">
    <location>
        <position position="156"/>
    </location>
    <ligand>
        <name>substrate</name>
    </ligand>
</feature>
<feature type="binding site" evidence="2">
    <location>
        <position position="157"/>
    </location>
    <ligand>
        <name>Fe cation</name>
        <dbReference type="ChEBI" id="CHEBI:24875"/>
        <label>1</label>
    </ligand>
</feature>
<feature type="binding site" evidence="2">
    <location>
        <position position="160"/>
    </location>
    <ligand>
        <name>Fe cation</name>
        <dbReference type="ChEBI" id="CHEBI:24875"/>
        <label>2</label>
    </ligand>
</feature>
<feature type="binding site" evidence="2">
    <location>
        <position position="161"/>
    </location>
    <ligand>
        <name>Fe cation</name>
        <dbReference type="ChEBI" id="CHEBI:24875"/>
        <label>1</label>
    </ligand>
</feature>
<feature type="binding site" evidence="1">
    <location>
        <position position="188"/>
    </location>
    <ligand>
        <name>substrate</name>
    </ligand>
</feature>
<feature type="binding site" evidence="1">
    <location>
        <position position="189"/>
    </location>
    <ligand>
        <name>substrate</name>
    </ligand>
</feature>
<feature type="binding site" evidence="1">
    <location>
        <position position="262"/>
    </location>
    <ligand>
        <name>substrate</name>
    </ligand>
</feature>
<feature type="binding site" evidence="2">
    <location>
        <position position="269"/>
    </location>
    <ligand>
        <name>Fe cation</name>
        <dbReference type="ChEBI" id="CHEBI:24875"/>
        <label>2</label>
    </ligand>
</feature>
<feature type="binding site" evidence="2">
    <location>
        <position position="298"/>
    </location>
    <ligand>
        <name>Fe cation</name>
        <dbReference type="ChEBI" id="CHEBI:24875"/>
        <label>2</label>
    </ligand>
</feature>
<feature type="binding site" evidence="2">
    <location>
        <position position="301"/>
    </location>
    <ligand>
        <name>Fe cation</name>
        <dbReference type="ChEBI" id="CHEBI:24875"/>
        <label>1</label>
    </ligand>
</feature>
<feature type="binding site" evidence="2">
    <location>
        <position position="302"/>
    </location>
    <ligand>
        <name>Fe cation</name>
        <dbReference type="ChEBI" id="CHEBI:24875"/>
        <label>2</label>
    </ligand>
</feature>
<feature type="modified residue" description="Phosphoserine" evidence="1">
    <location>
        <position position="198"/>
    </location>
</feature>
<feature type="modified residue" description="Phosphoserine" evidence="1">
    <location>
        <position position="203"/>
    </location>
</feature>
<feature type="sequence conflict" description="In Ref. 1; AAF22305." evidence="4" ref="1">
    <original>L</original>
    <variation>M</variation>
    <location>
        <position position="5"/>
    </location>
</feature>
<feature type="sequence conflict" description="In Ref. 1; AAF22305 and 2; AAL99940." evidence="4" ref="1 2">
    <original>A</original>
    <variation>V</variation>
    <location>
        <position position="293"/>
    </location>
</feature>
<feature type="sequence conflict" description="In Ref. 1; AAF22305." evidence="4" ref="1">
    <original>Y</original>
    <variation>H</variation>
    <location>
        <position position="356"/>
    </location>
</feature>
<feature type="sequence conflict" description="In Ref. 1; AAF22305." evidence="4" ref="1">
    <original>G</original>
    <variation>S</variation>
    <location>
        <position position="359"/>
    </location>
</feature>